<comment type="function">
    <text evidence="2 3 4">Calcium-activated, phospholipid- and diacylglycerol (DAG)-dependent serine/threonine-protein kinase that plays diverse roles in neuronal cells and eye tissues, such as regulation of the neuronal receptors GRIA4/GLUR4 and GRIN1/NMDAR1, modulation of receptors and neuronal functions related to sensitivity to opiates, pain and alcohol, mediation of synaptic function and cell survival after ischemia, and inhibition of gap junction activity after oxidative stress. Binds and phosphorylates GRIA4/GLUR4 glutamate receptor and regulates its function by increasing plasma membrane-associated GRIA4 expression. In primary cerebellar neurons treated with the agonist 3,5-dihyidroxyphenylglycine, functions downstream of the metabotropic glutamate receptor GRM5/MGLUR5 and phosphorylates GRIN1/NMDAR1 receptor which plays a key role in synaptic plasticity, synaptogenesis, excitotoxicity, memory acquisition and learning. May be involved in the regulation of hippocampal long-term potentiation (LTP), but may be not necessary for the process of synaptic plasticity. May be involved in desensitization of mu-type opioid receptor-mediated G-protein activation in the spinal cord, and may be critical for the development and/or maintenance of morphine-induced reinforcing effects in the limbic forebrain. May modulate the functionality of mu-type-opioid receptors by participating in a signaling pathway which leads to the phosphorylation and degradation of opioid receptors. May also contributes to chronic morphine-induced changes in nociceptive processing. Plays a role in neuropathic pain mechanisms and contributes to the maintenance of the allodynia pain produced by peripheral inflammation. Plays an important role in initial sensitivity and tolerance to ethanol, by mediating the behavioral effects of ethanol as well as the effects of this drug on the GABA(A) receptors. During and after cerebral ischemia modulate neurotransmission and cell survival in synaptic membranes, and is involved in insulin-induced inhibition of necrosis, an important mechanism for minimizing ischemic injury. Required for the elimination of multiple climbing fibers during innervation of Purkinje cells in developing cerebellum. Is activated in lens epithelial cells upon hydrogen peroxide treatment, and phosphorylates connexin-43 (GJA1/CX43), resulting in disassembly of GJA1 gap junction plaques and inhibition of gap junction activity which could provide a protective effect against oxidative stress. Phosphorylates p53/TP53 and promotes p53/TP53-dependent apoptosis in response to DNA damage. Involved in the phase resetting of the cerebral cortex circadian clock during temporally restricted feeding. Stabilizes the core clock component BMAL1 by interfering with its ubiquitination, thus suppressing its degradation, resulting in phase resetting of the cerebral cortex clock. Phosphorylates and activates LRRK1, which phosphorylates RAB proteins involved in intracellular trafficking (By similarity).</text>
</comment>
<comment type="catalytic activity">
    <reaction evidence="2">
        <text>L-seryl-[protein] + ATP = O-phospho-L-seryl-[protein] + ADP + H(+)</text>
        <dbReference type="Rhea" id="RHEA:17989"/>
        <dbReference type="Rhea" id="RHEA-COMP:9863"/>
        <dbReference type="Rhea" id="RHEA-COMP:11604"/>
        <dbReference type="ChEBI" id="CHEBI:15378"/>
        <dbReference type="ChEBI" id="CHEBI:29999"/>
        <dbReference type="ChEBI" id="CHEBI:30616"/>
        <dbReference type="ChEBI" id="CHEBI:83421"/>
        <dbReference type="ChEBI" id="CHEBI:456216"/>
        <dbReference type="EC" id="2.7.11.13"/>
    </reaction>
</comment>
<comment type="catalytic activity">
    <reaction evidence="2">
        <text>L-threonyl-[protein] + ATP = O-phospho-L-threonyl-[protein] + ADP + H(+)</text>
        <dbReference type="Rhea" id="RHEA:46608"/>
        <dbReference type="Rhea" id="RHEA-COMP:11060"/>
        <dbReference type="Rhea" id="RHEA-COMP:11605"/>
        <dbReference type="ChEBI" id="CHEBI:15378"/>
        <dbReference type="ChEBI" id="CHEBI:30013"/>
        <dbReference type="ChEBI" id="CHEBI:30616"/>
        <dbReference type="ChEBI" id="CHEBI:61977"/>
        <dbReference type="ChEBI" id="CHEBI:456216"/>
        <dbReference type="EC" id="2.7.11.13"/>
    </reaction>
</comment>
<comment type="cofactor">
    <cofactor evidence="6">
        <name>Ca(2+)</name>
        <dbReference type="ChEBI" id="CHEBI:29108"/>
    </cofactor>
    <text evidence="2">Binds 3 Ca(2+) ions per subunit. The ions are bound to the C2 domain.</text>
</comment>
<comment type="activity regulation">
    <text>Classical (or conventional) PKCs (PRKCA, PRKCB and PRKCG) are activated by calcium and diacylglycerol (DAG) in the presence of phosphatidylserine. Three specific sites; Thr-514 (activation loop of the kinase domain), Thr-655 (turn motif) and Thr-674 (hydrophobic region), need to be phosphorylated for its full activation.</text>
</comment>
<comment type="subunit">
    <text evidence="2 3 4">Interacts with CDCP1 and GRIA4. Interacts with TP53INP1 and p53/TP53. Interacts with BMAL1.</text>
</comment>
<comment type="subcellular location">
    <subcellularLocation>
        <location evidence="3">Cytoplasm</location>
    </subcellularLocation>
    <subcellularLocation>
        <location evidence="1">Cytoplasm</location>
        <location evidence="1">Perinuclear region</location>
    </subcellularLocation>
    <subcellularLocation>
        <location evidence="3">Cell membrane</location>
        <topology evidence="1">Peripheral membrane protein</topology>
    </subcellularLocation>
    <subcellularLocation>
        <location evidence="3">Synapse</location>
        <location evidence="3">Synaptosome</location>
    </subcellularLocation>
    <subcellularLocation>
        <location evidence="4">Cell projection</location>
        <location evidence="4">Dendrite</location>
    </subcellularLocation>
    <text evidence="3">Translocates to synaptic membranes on stimulation.</text>
</comment>
<comment type="PTM">
    <text evidence="3">Autophosphorylation on Thr-674 appears to regulate motor functions of junctophilins, JPH3 and JPH4.</text>
</comment>
<comment type="PTM">
    <text evidence="2">Ubiquitinated.</text>
</comment>
<comment type="similarity">
    <text evidence="11">Belongs to the protein kinase superfamily. AGC Ser/Thr protein kinase family. PKC subfamily.</text>
</comment>
<evidence type="ECO:0000250" key="1"/>
<evidence type="ECO:0000250" key="2">
    <source>
        <dbReference type="UniProtKB" id="P05129"/>
    </source>
</evidence>
<evidence type="ECO:0000250" key="3">
    <source>
        <dbReference type="UniProtKB" id="P63318"/>
    </source>
</evidence>
<evidence type="ECO:0000250" key="4">
    <source>
        <dbReference type="UniProtKB" id="P63319"/>
    </source>
</evidence>
<evidence type="ECO:0000255" key="5"/>
<evidence type="ECO:0000255" key="6">
    <source>
        <dbReference type="PROSITE-ProRule" id="PRU00041"/>
    </source>
</evidence>
<evidence type="ECO:0000255" key="7">
    <source>
        <dbReference type="PROSITE-ProRule" id="PRU00159"/>
    </source>
</evidence>
<evidence type="ECO:0000255" key="8">
    <source>
        <dbReference type="PROSITE-ProRule" id="PRU00226"/>
    </source>
</evidence>
<evidence type="ECO:0000255" key="9">
    <source>
        <dbReference type="PROSITE-ProRule" id="PRU00618"/>
    </source>
</evidence>
<evidence type="ECO:0000255" key="10">
    <source>
        <dbReference type="PROSITE-ProRule" id="PRU10027"/>
    </source>
</evidence>
<evidence type="ECO:0000305" key="11"/>
<reference key="1">
    <citation type="submission" date="2005-06" db="EMBL/GenBank/DDBJ databases">
        <title>DNA sequences of macaque genes expressed in brain or testis and its evolutionary implications.</title>
        <authorList>
            <consortium name="International consortium for macaque cDNA sequencing and analysis"/>
        </authorList>
    </citation>
    <scope>NUCLEOTIDE SEQUENCE [LARGE SCALE MRNA]</scope>
    <source>
        <tissue>Brain cortex</tissue>
    </source>
</reference>
<organism>
    <name type="scientific">Macaca fascicularis</name>
    <name type="common">Crab-eating macaque</name>
    <name type="synonym">Cynomolgus monkey</name>
    <dbReference type="NCBI Taxonomy" id="9541"/>
    <lineage>
        <taxon>Eukaryota</taxon>
        <taxon>Metazoa</taxon>
        <taxon>Chordata</taxon>
        <taxon>Craniata</taxon>
        <taxon>Vertebrata</taxon>
        <taxon>Euteleostomi</taxon>
        <taxon>Mammalia</taxon>
        <taxon>Eutheria</taxon>
        <taxon>Euarchontoglires</taxon>
        <taxon>Primates</taxon>
        <taxon>Haplorrhini</taxon>
        <taxon>Catarrhini</taxon>
        <taxon>Cercopithecidae</taxon>
        <taxon>Cercopithecinae</taxon>
        <taxon>Macaca</taxon>
    </lineage>
</organism>
<protein>
    <recommendedName>
        <fullName>Protein kinase C gamma type</fullName>
        <shortName>PKC-gamma</shortName>
        <ecNumber evidence="2">2.7.11.13</ecNumber>
    </recommendedName>
</protein>
<gene>
    <name type="primary">PRKCG</name>
    <name type="ORF">QccE-17190</name>
</gene>
<accession>Q4R4U2</accession>
<keyword id="KW-0067">ATP-binding</keyword>
<keyword id="KW-0090">Biological rhythms</keyword>
<keyword id="KW-0106">Calcium</keyword>
<keyword id="KW-1003">Cell membrane</keyword>
<keyword id="KW-0966">Cell projection</keyword>
<keyword id="KW-0963">Cytoplasm</keyword>
<keyword id="KW-0418">Kinase</keyword>
<keyword id="KW-0472">Membrane</keyword>
<keyword id="KW-0479">Metal-binding</keyword>
<keyword id="KW-0547">Nucleotide-binding</keyword>
<keyword id="KW-0597">Phosphoprotein</keyword>
<keyword id="KW-1185">Reference proteome</keyword>
<keyword id="KW-0677">Repeat</keyword>
<keyword id="KW-0723">Serine/threonine-protein kinase</keyword>
<keyword id="KW-0770">Synapse</keyword>
<keyword id="KW-0771">Synaptosome</keyword>
<keyword id="KW-0808">Transferase</keyword>
<keyword id="KW-0832">Ubl conjugation</keyword>
<keyword id="KW-0862">Zinc</keyword>
<keyword id="KW-0863">Zinc-finger</keyword>
<dbReference type="EC" id="2.7.11.13" evidence="2"/>
<dbReference type="EMBL" id="AB169802">
    <property type="protein sequence ID" value="BAE01883.1"/>
    <property type="molecule type" value="mRNA"/>
</dbReference>
<dbReference type="RefSeq" id="NP_001270323.1">
    <property type="nucleotide sequence ID" value="NM_001283394.1"/>
</dbReference>
<dbReference type="SMR" id="Q4R4U2"/>
<dbReference type="STRING" id="9541.ENSMFAP00000031112"/>
<dbReference type="eggNOG" id="KOG0696">
    <property type="taxonomic scope" value="Eukaryota"/>
</dbReference>
<dbReference type="Proteomes" id="UP000233100">
    <property type="component" value="Unplaced"/>
</dbReference>
<dbReference type="GO" id="GO:0005829">
    <property type="term" value="C:cytosol"/>
    <property type="evidence" value="ECO:0000250"/>
    <property type="project" value="UniProtKB"/>
</dbReference>
<dbReference type="GO" id="GO:0030425">
    <property type="term" value="C:dendrite"/>
    <property type="evidence" value="ECO:0007669"/>
    <property type="project" value="UniProtKB-SubCell"/>
</dbReference>
<dbReference type="GO" id="GO:0048471">
    <property type="term" value="C:perinuclear region of cytoplasm"/>
    <property type="evidence" value="ECO:0000250"/>
    <property type="project" value="UniProtKB"/>
</dbReference>
<dbReference type="GO" id="GO:0005886">
    <property type="term" value="C:plasma membrane"/>
    <property type="evidence" value="ECO:0007669"/>
    <property type="project" value="UniProtKB-SubCell"/>
</dbReference>
<dbReference type="GO" id="GO:0045202">
    <property type="term" value="C:synapse"/>
    <property type="evidence" value="ECO:0007669"/>
    <property type="project" value="UniProtKB-SubCell"/>
</dbReference>
<dbReference type="GO" id="GO:0005524">
    <property type="term" value="F:ATP binding"/>
    <property type="evidence" value="ECO:0007669"/>
    <property type="project" value="UniProtKB-KW"/>
</dbReference>
<dbReference type="GO" id="GO:0004697">
    <property type="term" value="F:diacylglycerol-dependent serine/threonine kinase activity"/>
    <property type="evidence" value="ECO:0007669"/>
    <property type="project" value="UniProtKB-EC"/>
</dbReference>
<dbReference type="GO" id="GO:0106310">
    <property type="term" value="F:protein serine kinase activity"/>
    <property type="evidence" value="ECO:0007669"/>
    <property type="project" value="RHEA"/>
</dbReference>
<dbReference type="GO" id="GO:0008270">
    <property type="term" value="F:zinc ion binding"/>
    <property type="evidence" value="ECO:0007669"/>
    <property type="project" value="UniProtKB-KW"/>
</dbReference>
<dbReference type="GO" id="GO:0043524">
    <property type="term" value="P:negative regulation of neuron apoptotic process"/>
    <property type="evidence" value="ECO:0000250"/>
    <property type="project" value="UniProtKB"/>
</dbReference>
<dbReference type="GO" id="GO:1901799">
    <property type="term" value="P:negative regulation of proteasomal protein catabolic process"/>
    <property type="evidence" value="ECO:0000250"/>
    <property type="project" value="UniProtKB"/>
</dbReference>
<dbReference type="GO" id="GO:0031397">
    <property type="term" value="P:negative regulation of protein ubiquitination"/>
    <property type="evidence" value="ECO:0000250"/>
    <property type="project" value="UniProtKB"/>
</dbReference>
<dbReference type="GO" id="GO:0042752">
    <property type="term" value="P:regulation of circadian rhythm"/>
    <property type="evidence" value="ECO:0000250"/>
    <property type="project" value="UniProtKB"/>
</dbReference>
<dbReference type="GO" id="GO:0032095">
    <property type="term" value="P:regulation of response to food"/>
    <property type="evidence" value="ECO:0000250"/>
    <property type="project" value="UniProtKB"/>
</dbReference>
<dbReference type="GO" id="GO:0043278">
    <property type="term" value="P:response to morphine"/>
    <property type="evidence" value="ECO:0000250"/>
    <property type="project" value="UniProtKB"/>
</dbReference>
<dbReference type="GO" id="GO:0048265">
    <property type="term" value="P:response to pain"/>
    <property type="evidence" value="ECO:0000250"/>
    <property type="project" value="UniProtKB"/>
</dbReference>
<dbReference type="GO" id="GO:0048511">
    <property type="term" value="P:rhythmic process"/>
    <property type="evidence" value="ECO:0007669"/>
    <property type="project" value="UniProtKB-KW"/>
</dbReference>
<dbReference type="CDD" id="cd20833">
    <property type="entry name" value="C1_cPKC_rpt1"/>
    <property type="match status" value="1"/>
</dbReference>
<dbReference type="CDD" id="cd20836">
    <property type="entry name" value="C1_cPKC_rpt2"/>
    <property type="match status" value="1"/>
</dbReference>
<dbReference type="CDD" id="cd04026">
    <property type="entry name" value="C2_PKC_alpha_gamma"/>
    <property type="match status" value="1"/>
</dbReference>
<dbReference type="CDD" id="cd05587">
    <property type="entry name" value="STKc_cPKC"/>
    <property type="match status" value="1"/>
</dbReference>
<dbReference type="FunFam" id="2.60.40.150:FF:000012">
    <property type="entry name" value="Kinase C alpha type"/>
    <property type="match status" value="1"/>
</dbReference>
<dbReference type="FunFam" id="1.10.510.10:FF:000023">
    <property type="entry name" value="Protein kinase C"/>
    <property type="match status" value="1"/>
</dbReference>
<dbReference type="FunFam" id="3.30.200.20:FF:000080">
    <property type="entry name" value="Protein kinase C"/>
    <property type="match status" value="1"/>
</dbReference>
<dbReference type="FunFam" id="3.30.200.20:FF:000103">
    <property type="entry name" value="Protein kinase C"/>
    <property type="match status" value="1"/>
</dbReference>
<dbReference type="FunFam" id="3.30.60.20:FF:000006">
    <property type="entry name" value="Protein kinase C"/>
    <property type="match status" value="1"/>
</dbReference>
<dbReference type="FunFam" id="3.30.60.20:FF:000011">
    <property type="entry name" value="Protein kinase C"/>
    <property type="match status" value="1"/>
</dbReference>
<dbReference type="Gene3D" id="3.30.60.20">
    <property type="match status" value="2"/>
</dbReference>
<dbReference type="Gene3D" id="2.60.40.150">
    <property type="entry name" value="C2 domain"/>
    <property type="match status" value="1"/>
</dbReference>
<dbReference type="Gene3D" id="3.30.200.20">
    <property type="entry name" value="Phosphorylase Kinase, domain 1"/>
    <property type="match status" value="2"/>
</dbReference>
<dbReference type="Gene3D" id="1.10.510.10">
    <property type="entry name" value="Transferase(Phosphotransferase) domain 1"/>
    <property type="match status" value="1"/>
</dbReference>
<dbReference type="InterPro" id="IPR000961">
    <property type="entry name" value="AGC-kinase_C"/>
</dbReference>
<dbReference type="InterPro" id="IPR046349">
    <property type="entry name" value="C1-like_sf"/>
</dbReference>
<dbReference type="InterPro" id="IPR000008">
    <property type="entry name" value="C2_dom"/>
</dbReference>
<dbReference type="InterPro" id="IPR035892">
    <property type="entry name" value="C2_domain_sf"/>
</dbReference>
<dbReference type="InterPro" id="IPR020454">
    <property type="entry name" value="DAG/PE-bd"/>
</dbReference>
<dbReference type="InterPro" id="IPR011009">
    <property type="entry name" value="Kinase-like_dom_sf"/>
</dbReference>
<dbReference type="InterPro" id="IPR002219">
    <property type="entry name" value="PE/DAG-bd"/>
</dbReference>
<dbReference type="InterPro" id="IPR017892">
    <property type="entry name" value="Pkinase_C"/>
</dbReference>
<dbReference type="InterPro" id="IPR000719">
    <property type="entry name" value="Prot_kinase_dom"/>
</dbReference>
<dbReference type="InterPro" id="IPR017441">
    <property type="entry name" value="Protein_kinase_ATP_BS"/>
</dbReference>
<dbReference type="InterPro" id="IPR014375">
    <property type="entry name" value="Protein_kinase_C_a/b/g"/>
</dbReference>
<dbReference type="InterPro" id="IPR008271">
    <property type="entry name" value="Ser/Thr_kinase_AS"/>
</dbReference>
<dbReference type="PANTHER" id="PTHR24351">
    <property type="entry name" value="RIBOSOMAL PROTEIN S6 KINASE"/>
    <property type="match status" value="1"/>
</dbReference>
<dbReference type="Pfam" id="PF00130">
    <property type="entry name" value="C1_1"/>
    <property type="match status" value="2"/>
</dbReference>
<dbReference type="Pfam" id="PF00168">
    <property type="entry name" value="C2"/>
    <property type="match status" value="1"/>
</dbReference>
<dbReference type="Pfam" id="PF00069">
    <property type="entry name" value="Pkinase"/>
    <property type="match status" value="1"/>
</dbReference>
<dbReference type="Pfam" id="PF00433">
    <property type="entry name" value="Pkinase_C"/>
    <property type="match status" value="1"/>
</dbReference>
<dbReference type="PIRSF" id="PIRSF000550">
    <property type="entry name" value="PKC_alpha"/>
    <property type="match status" value="1"/>
</dbReference>
<dbReference type="PRINTS" id="PR00360">
    <property type="entry name" value="C2DOMAIN"/>
</dbReference>
<dbReference type="PRINTS" id="PR00008">
    <property type="entry name" value="DAGPEDOMAIN"/>
</dbReference>
<dbReference type="SMART" id="SM00109">
    <property type="entry name" value="C1"/>
    <property type="match status" value="2"/>
</dbReference>
<dbReference type="SMART" id="SM00239">
    <property type="entry name" value="C2"/>
    <property type="match status" value="1"/>
</dbReference>
<dbReference type="SMART" id="SM00133">
    <property type="entry name" value="S_TK_X"/>
    <property type="match status" value="1"/>
</dbReference>
<dbReference type="SMART" id="SM00220">
    <property type="entry name" value="S_TKc"/>
    <property type="match status" value="1"/>
</dbReference>
<dbReference type="SUPFAM" id="SSF49562">
    <property type="entry name" value="C2 domain (Calcium/lipid-binding domain, CaLB)"/>
    <property type="match status" value="1"/>
</dbReference>
<dbReference type="SUPFAM" id="SSF57889">
    <property type="entry name" value="Cysteine-rich domain"/>
    <property type="match status" value="2"/>
</dbReference>
<dbReference type="SUPFAM" id="SSF56112">
    <property type="entry name" value="Protein kinase-like (PK-like)"/>
    <property type="match status" value="1"/>
</dbReference>
<dbReference type="PROSITE" id="PS51285">
    <property type="entry name" value="AGC_KINASE_CTER"/>
    <property type="match status" value="1"/>
</dbReference>
<dbReference type="PROSITE" id="PS50004">
    <property type="entry name" value="C2"/>
    <property type="match status" value="1"/>
</dbReference>
<dbReference type="PROSITE" id="PS00107">
    <property type="entry name" value="PROTEIN_KINASE_ATP"/>
    <property type="match status" value="1"/>
</dbReference>
<dbReference type="PROSITE" id="PS50011">
    <property type="entry name" value="PROTEIN_KINASE_DOM"/>
    <property type="match status" value="1"/>
</dbReference>
<dbReference type="PROSITE" id="PS00108">
    <property type="entry name" value="PROTEIN_KINASE_ST"/>
    <property type="match status" value="1"/>
</dbReference>
<dbReference type="PROSITE" id="PS00479">
    <property type="entry name" value="ZF_DAG_PE_1"/>
    <property type="match status" value="2"/>
</dbReference>
<dbReference type="PROSITE" id="PS50081">
    <property type="entry name" value="ZF_DAG_PE_2"/>
    <property type="match status" value="2"/>
</dbReference>
<proteinExistence type="evidence at transcript level"/>
<feature type="chain" id="PRO_0000281853" description="Protein kinase C gamma type">
    <location>
        <begin position="1"/>
        <end position="697"/>
    </location>
</feature>
<feature type="domain" description="C2" evidence="6">
    <location>
        <begin position="157"/>
        <end position="275"/>
    </location>
</feature>
<feature type="domain" description="Protein kinase" evidence="7">
    <location>
        <begin position="351"/>
        <end position="614"/>
    </location>
</feature>
<feature type="domain" description="AGC-kinase C-terminal" evidence="9">
    <location>
        <begin position="615"/>
        <end position="685"/>
    </location>
</feature>
<feature type="zinc finger region" description="Phorbol-ester/DAG-type 1" evidence="8">
    <location>
        <begin position="35"/>
        <end position="85"/>
    </location>
</feature>
<feature type="zinc finger region" description="Phorbol-ester/DAG-type 2" evidence="8">
    <location>
        <begin position="100"/>
        <end position="150"/>
    </location>
</feature>
<feature type="active site" description="Proton acceptor" evidence="7 10">
    <location>
        <position position="480"/>
    </location>
</feature>
<feature type="binding site" evidence="3">
    <location>
        <position position="186"/>
    </location>
    <ligand>
        <name>Ca(2+)</name>
        <dbReference type="ChEBI" id="CHEBI:29108"/>
        <label>1</label>
    </ligand>
</feature>
<feature type="binding site" evidence="2">
    <location>
        <position position="187"/>
    </location>
    <ligand>
        <name>Ca(2+)</name>
        <dbReference type="ChEBI" id="CHEBI:29108"/>
        <label>1</label>
    </ligand>
</feature>
<feature type="binding site" evidence="2">
    <location>
        <position position="187"/>
    </location>
    <ligand>
        <name>Ca(2+)</name>
        <dbReference type="ChEBI" id="CHEBI:29108"/>
        <label>2</label>
    </ligand>
</feature>
<feature type="binding site" evidence="2">
    <location>
        <position position="193"/>
    </location>
    <ligand>
        <name>Ca(2+)</name>
        <dbReference type="ChEBI" id="CHEBI:29108"/>
        <label>2</label>
    </ligand>
</feature>
<feature type="binding site" evidence="2">
    <location>
        <position position="246"/>
    </location>
    <ligand>
        <name>Ca(2+)</name>
        <dbReference type="ChEBI" id="CHEBI:29108"/>
        <label>1</label>
    </ligand>
</feature>
<feature type="binding site" evidence="2">
    <location>
        <position position="246"/>
    </location>
    <ligand>
        <name>Ca(2+)</name>
        <dbReference type="ChEBI" id="CHEBI:29108"/>
        <label>2</label>
    </ligand>
</feature>
<feature type="binding site" evidence="2">
    <location>
        <position position="247"/>
    </location>
    <ligand>
        <name>Ca(2+)</name>
        <dbReference type="ChEBI" id="CHEBI:29108"/>
        <label>2</label>
    </ligand>
</feature>
<feature type="binding site" evidence="2">
    <location>
        <position position="248"/>
    </location>
    <ligand>
        <name>Ca(2+)</name>
        <dbReference type="ChEBI" id="CHEBI:29108"/>
        <label>1</label>
    </ligand>
</feature>
<feature type="binding site" evidence="2">
    <location>
        <position position="248"/>
    </location>
    <ligand>
        <name>Ca(2+)</name>
        <dbReference type="ChEBI" id="CHEBI:29108"/>
        <label>2</label>
    </ligand>
</feature>
<feature type="binding site" evidence="2">
    <location>
        <position position="248"/>
    </location>
    <ligand>
        <name>Ca(2+)</name>
        <dbReference type="ChEBI" id="CHEBI:29108"/>
        <label>3</label>
    </ligand>
</feature>
<feature type="binding site" evidence="2">
    <location>
        <position position="251"/>
    </location>
    <ligand>
        <name>Ca(2+)</name>
        <dbReference type="ChEBI" id="CHEBI:29108"/>
        <label>3</label>
    </ligand>
</feature>
<feature type="binding site" evidence="2">
    <location>
        <position position="252"/>
    </location>
    <ligand>
        <name>Ca(2+)</name>
        <dbReference type="ChEBI" id="CHEBI:29108"/>
        <label>3</label>
    </ligand>
</feature>
<feature type="binding site" evidence="2">
    <location>
        <position position="254"/>
    </location>
    <ligand>
        <name>Ca(2+)</name>
        <dbReference type="ChEBI" id="CHEBI:29108"/>
        <label>1</label>
    </ligand>
</feature>
<feature type="binding site" evidence="2">
    <location>
        <position position="254"/>
    </location>
    <ligand>
        <name>Ca(2+)</name>
        <dbReference type="ChEBI" id="CHEBI:29108"/>
        <label>3</label>
    </ligand>
</feature>
<feature type="binding site" evidence="7">
    <location>
        <begin position="357"/>
        <end position="365"/>
    </location>
    <ligand>
        <name>ATP</name>
        <dbReference type="ChEBI" id="CHEBI:30616"/>
    </ligand>
</feature>
<feature type="binding site" evidence="7">
    <location>
        <position position="380"/>
    </location>
    <ligand>
        <name>ATP</name>
        <dbReference type="ChEBI" id="CHEBI:30616"/>
    </ligand>
</feature>
<feature type="modified residue" description="Phosphothreonine; by autocatalysis" evidence="1">
    <location>
        <position position="250"/>
    </location>
</feature>
<feature type="modified residue" description="Phosphoserine" evidence="3">
    <location>
        <position position="320"/>
    </location>
</feature>
<feature type="modified residue" description="Phosphoserine" evidence="3">
    <location>
        <position position="322"/>
    </location>
</feature>
<feature type="modified residue" description="Phosphoserine" evidence="3">
    <location>
        <position position="326"/>
    </location>
</feature>
<feature type="modified residue" description="Phosphoserine" evidence="3">
    <location>
        <position position="328"/>
    </location>
</feature>
<feature type="modified residue" description="Phosphoserine" evidence="3">
    <location>
        <position position="330"/>
    </location>
</feature>
<feature type="modified residue" description="Phosphothreonine" evidence="3">
    <location>
        <position position="332"/>
    </location>
</feature>
<feature type="modified residue" description="Phosphoserine" evidence="3">
    <location>
        <position position="373"/>
    </location>
</feature>
<feature type="modified residue" description="Phosphothreonine; by PDPK1" evidence="3">
    <location>
        <position position="514"/>
    </location>
</feature>
<feature type="modified residue" description="Phosphothreonine; by autocatalysis" evidence="1">
    <location>
        <position position="648"/>
    </location>
</feature>
<feature type="modified residue" description="Phosphothreonine; by autocatalysis" evidence="3 5">
    <location>
        <position position="655"/>
    </location>
</feature>
<feature type="modified residue" description="Phosphothreonine; by autocatalysis" evidence="3">
    <location>
        <position position="674"/>
    </location>
</feature>
<feature type="modified residue" description="Phosphotyrosine; by SYK" evidence="1">
    <location>
        <position position="675"/>
    </location>
</feature>
<feature type="modified residue" description="Phosphoserine" evidence="4">
    <location>
        <position position="687"/>
    </location>
</feature>
<sequence length="697" mass="78364">MAGLGPGGGDSEGGPRPLFCRKGALRQKVVHEVKSHKFTARFFKQPTFCSHCTDFIWGIGKQGLQCQVCSFVVHRRCHEFVTFECPGAGKGPQTDDPRNKHKFRLHSYSSPTFCDHCGSLLYGLVHQGMKCSCCEMNVHRRCVRSVPSLCGVDHTERRGRLQLEIRAPTADEIHITVGEARNLIPMDPNGLSDPYVKLKLIPDPRNLTKQKTRTVKATLNPVWNETFVFNLKPGDVERRLSVEVWDWDRTSRNDFMGAMSFGVSELLKAPVDGWYKLLNQEEGEYYNVPVADADNCSLLQKFEACNYPLELYERVRMGPSSSPIPSPSPSPTDPKRCFFGASPGRLHISDFSFLMVLGKGSFGKVMLAERRGSDELYAIKILKKDVIVQDDDVDCTLVEKRVLALGGRGPGGRPHFLTQLHSTFQTPDRLYFVMEYVTGGDLMYHIQQLGKFKEPHAAFYAAEIAIGLFFLHNQGIIYRDLKLDNVVLDAEGLIKITDFGMCKENVFPGTTTRTFCGTPDYIAPEIIAYQPYGKSVDWWSFGVLLYEMLAGQPPFDGEDEEELFQAIMEQTVTYPKSLSREAVAICKGFLTKHPGKRLGSGPDGEPTIRAHGFFRWIDWERLERLEIPPPFRPRPCGRSGENFDKFFTRAAPALTPPDRLVLASIDQADFQGFTYVNPDFVHPDARSPTSPVPVPVM</sequence>
<name>KPCG_MACFA</name>